<gene>
    <name evidence="1" type="primary">surE</name>
    <name type="ordered locus">Amet_2636</name>
</gene>
<proteinExistence type="inferred from homology"/>
<sequence>MRILVTNDDGIFAEGIYVLAKSLQDVGEVIVVAPNTERSAVGHGITMHHPLRMAGVRFFDTSIEAYSVNGTPADCIKIAIEVLLKDRKPTVVVSGINNGPNLGTDVLYSGTVSAAVEAAILDLPSIAVSMATSKIDQYNHAAEFICKLLSNTLHIEELSDTIINVNYPTIAYSEIKGVKVTNLGIRKYENAFIERLDPRGNAYYWISGKAMELAQDHESDVQAINDNYISITPIHFDLTHFKSFKKLKNLNLEK</sequence>
<evidence type="ECO:0000255" key="1">
    <source>
        <dbReference type="HAMAP-Rule" id="MF_00060"/>
    </source>
</evidence>
<keyword id="KW-0963">Cytoplasm</keyword>
<keyword id="KW-0378">Hydrolase</keyword>
<keyword id="KW-0479">Metal-binding</keyword>
<keyword id="KW-0547">Nucleotide-binding</keyword>
<keyword id="KW-1185">Reference proteome</keyword>
<reference key="1">
    <citation type="journal article" date="2016" name="Genome Announc.">
        <title>Complete genome sequence of Alkaliphilus metalliredigens strain QYMF, an alkaliphilic and metal-reducing bacterium isolated from borax-contaminated leachate ponds.</title>
        <authorList>
            <person name="Hwang C."/>
            <person name="Copeland A."/>
            <person name="Lucas S."/>
            <person name="Lapidus A."/>
            <person name="Barry K."/>
            <person name="Detter J.C."/>
            <person name="Glavina Del Rio T."/>
            <person name="Hammon N."/>
            <person name="Israni S."/>
            <person name="Dalin E."/>
            <person name="Tice H."/>
            <person name="Pitluck S."/>
            <person name="Chertkov O."/>
            <person name="Brettin T."/>
            <person name="Bruce D."/>
            <person name="Han C."/>
            <person name="Schmutz J."/>
            <person name="Larimer F."/>
            <person name="Land M.L."/>
            <person name="Hauser L."/>
            <person name="Kyrpides N."/>
            <person name="Mikhailova N."/>
            <person name="Ye Q."/>
            <person name="Zhou J."/>
            <person name="Richardson P."/>
            <person name="Fields M.W."/>
        </authorList>
    </citation>
    <scope>NUCLEOTIDE SEQUENCE [LARGE SCALE GENOMIC DNA]</scope>
    <source>
        <strain>QYMF</strain>
    </source>
</reference>
<accession>A6TRH0</accession>
<comment type="function">
    <text evidence="1">Nucleotidase that shows phosphatase activity on nucleoside 5'-monophosphates.</text>
</comment>
<comment type="catalytic activity">
    <reaction evidence="1">
        <text>a ribonucleoside 5'-phosphate + H2O = a ribonucleoside + phosphate</text>
        <dbReference type="Rhea" id="RHEA:12484"/>
        <dbReference type="ChEBI" id="CHEBI:15377"/>
        <dbReference type="ChEBI" id="CHEBI:18254"/>
        <dbReference type="ChEBI" id="CHEBI:43474"/>
        <dbReference type="ChEBI" id="CHEBI:58043"/>
        <dbReference type="EC" id="3.1.3.5"/>
    </reaction>
</comment>
<comment type="cofactor">
    <cofactor evidence="1">
        <name>a divalent metal cation</name>
        <dbReference type="ChEBI" id="CHEBI:60240"/>
    </cofactor>
    <text evidence="1">Binds 1 divalent metal cation per subunit.</text>
</comment>
<comment type="subcellular location">
    <subcellularLocation>
        <location evidence="1">Cytoplasm</location>
    </subcellularLocation>
</comment>
<comment type="similarity">
    <text evidence="1">Belongs to the SurE nucleotidase family.</text>
</comment>
<name>SURE_ALKMQ</name>
<feature type="chain" id="PRO_1000057409" description="5'-nucleotidase SurE">
    <location>
        <begin position="1"/>
        <end position="254"/>
    </location>
</feature>
<feature type="binding site" evidence="1">
    <location>
        <position position="8"/>
    </location>
    <ligand>
        <name>a divalent metal cation</name>
        <dbReference type="ChEBI" id="CHEBI:60240"/>
    </ligand>
</feature>
<feature type="binding site" evidence="1">
    <location>
        <position position="9"/>
    </location>
    <ligand>
        <name>a divalent metal cation</name>
        <dbReference type="ChEBI" id="CHEBI:60240"/>
    </ligand>
</feature>
<feature type="binding site" evidence="1">
    <location>
        <position position="39"/>
    </location>
    <ligand>
        <name>a divalent metal cation</name>
        <dbReference type="ChEBI" id="CHEBI:60240"/>
    </ligand>
</feature>
<feature type="binding site" evidence="1">
    <location>
        <position position="97"/>
    </location>
    <ligand>
        <name>a divalent metal cation</name>
        <dbReference type="ChEBI" id="CHEBI:60240"/>
    </ligand>
</feature>
<dbReference type="EC" id="3.1.3.5" evidence="1"/>
<dbReference type="EMBL" id="CP000724">
    <property type="protein sequence ID" value="ABR48788.1"/>
    <property type="molecule type" value="Genomic_DNA"/>
</dbReference>
<dbReference type="RefSeq" id="WP_012063762.1">
    <property type="nucleotide sequence ID" value="NC_009633.1"/>
</dbReference>
<dbReference type="SMR" id="A6TRH0"/>
<dbReference type="STRING" id="293826.Amet_2636"/>
<dbReference type="KEGG" id="amt:Amet_2636"/>
<dbReference type="eggNOG" id="COG0496">
    <property type="taxonomic scope" value="Bacteria"/>
</dbReference>
<dbReference type="HOGENOM" id="CLU_045192_1_3_9"/>
<dbReference type="OrthoDB" id="9780815at2"/>
<dbReference type="Proteomes" id="UP000001572">
    <property type="component" value="Chromosome"/>
</dbReference>
<dbReference type="GO" id="GO:0005737">
    <property type="term" value="C:cytoplasm"/>
    <property type="evidence" value="ECO:0007669"/>
    <property type="project" value="UniProtKB-SubCell"/>
</dbReference>
<dbReference type="GO" id="GO:0008254">
    <property type="term" value="F:3'-nucleotidase activity"/>
    <property type="evidence" value="ECO:0007669"/>
    <property type="project" value="TreeGrafter"/>
</dbReference>
<dbReference type="GO" id="GO:0008253">
    <property type="term" value="F:5'-nucleotidase activity"/>
    <property type="evidence" value="ECO:0007669"/>
    <property type="project" value="UniProtKB-UniRule"/>
</dbReference>
<dbReference type="GO" id="GO:0004309">
    <property type="term" value="F:exopolyphosphatase activity"/>
    <property type="evidence" value="ECO:0007669"/>
    <property type="project" value="TreeGrafter"/>
</dbReference>
<dbReference type="GO" id="GO:0046872">
    <property type="term" value="F:metal ion binding"/>
    <property type="evidence" value="ECO:0007669"/>
    <property type="project" value="UniProtKB-UniRule"/>
</dbReference>
<dbReference type="GO" id="GO:0000166">
    <property type="term" value="F:nucleotide binding"/>
    <property type="evidence" value="ECO:0007669"/>
    <property type="project" value="UniProtKB-KW"/>
</dbReference>
<dbReference type="FunFam" id="3.40.1210.10:FF:000001">
    <property type="entry name" value="5'/3'-nucleotidase SurE"/>
    <property type="match status" value="1"/>
</dbReference>
<dbReference type="Gene3D" id="3.40.1210.10">
    <property type="entry name" value="Survival protein SurE-like phosphatase/nucleotidase"/>
    <property type="match status" value="1"/>
</dbReference>
<dbReference type="HAMAP" id="MF_00060">
    <property type="entry name" value="SurE"/>
    <property type="match status" value="1"/>
</dbReference>
<dbReference type="InterPro" id="IPR030048">
    <property type="entry name" value="SurE"/>
</dbReference>
<dbReference type="InterPro" id="IPR002828">
    <property type="entry name" value="SurE-like_Pase/nucleotidase"/>
</dbReference>
<dbReference type="InterPro" id="IPR036523">
    <property type="entry name" value="SurE-like_sf"/>
</dbReference>
<dbReference type="NCBIfam" id="NF001490">
    <property type="entry name" value="PRK00346.1-4"/>
    <property type="match status" value="1"/>
</dbReference>
<dbReference type="NCBIfam" id="NF001492">
    <property type="entry name" value="PRK00346.2-2"/>
    <property type="match status" value="1"/>
</dbReference>
<dbReference type="NCBIfam" id="TIGR00087">
    <property type="entry name" value="surE"/>
    <property type="match status" value="1"/>
</dbReference>
<dbReference type="PANTHER" id="PTHR30457">
    <property type="entry name" value="5'-NUCLEOTIDASE SURE"/>
    <property type="match status" value="1"/>
</dbReference>
<dbReference type="PANTHER" id="PTHR30457:SF12">
    <property type="entry name" value="5'_3'-NUCLEOTIDASE SURE"/>
    <property type="match status" value="1"/>
</dbReference>
<dbReference type="Pfam" id="PF01975">
    <property type="entry name" value="SurE"/>
    <property type="match status" value="1"/>
</dbReference>
<dbReference type="SUPFAM" id="SSF64167">
    <property type="entry name" value="SurE-like"/>
    <property type="match status" value="1"/>
</dbReference>
<protein>
    <recommendedName>
        <fullName evidence="1">5'-nucleotidase SurE</fullName>
        <ecNumber evidence="1">3.1.3.5</ecNumber>
    </recommendedName>
    <alternativeName>
        <fullName evidence="1">Nucleoside 5'-monophosphate phosphohydrolase</fullName>
    </alternativeName>
</protein>
<organism>
    <name type="scientific">Alkaliphilus metalliredigens (strain QYMF)</name>
    <dbReference type="NCBI Taxonomy" id="293826"/>
    <lineage>
        <taxon>Bacteria</taxon>
        <taxon>Bacillati</taxon>
        <taxon>Bacillota</taxon>
        <taxon>Clostridia</taxon>
        <taxon>Peptostreptococcales</taxon>
        <taxon>Natronincolaceae</taxon>
        <taxon>Alkaliphilus</taxon>
    </lineage>
</organism>